<protein>
    <recommendedName>
        <fullName evidence="1">Protein TsgA</fullName>
    </recommendedName>
</protein>
<reference key="1">
    <citation type="journal article" date="2011" name="J. Bacteriol.">
        <title>Comparative genomics of 28 Salmonella enterica isolates: evidence for CRISPR-mediated adaptive sublineage evolution.</title>
        <authorList>
            <person name="Fricke W.F."/>
            <person name="Mammel M.K."/>
            <person name="McDermott P.F."/>
            <person name="Tartera C."/>
            <person name="White D.G."/>
            <person name="Leclerc J.E."/>
            <person name="Ravel J."/>
            <person name="Cebula T.A."/>
        </authorList>
    </citation>
    <scope>NUCLEOTIDE SEQUENCE [LARGE SCALE GENOMIC DNA]</scope>
    <source>
        <strain>CT_02021853</strain>
    </source>
</reference>
<dbReference type="EMBL" id="CP001144">
    <property type="protein sequence ID" value="ACH77770.1"/>
    <property type="molecule type" value="Genomic_DNA"/>
</dbReference>
<dbReference type="RefSeq" id="WP_000185217.1">
    <property type="nucleotide sequence ID" value="NC_011205.1"/>
</dbReference>
<dbReference type="SMR" id="B5FJP6"/>
<dbReference type="KEGG" id="sed:SeD_A3841"/>
<dbReference type="HOGENOM" id="CLU_056916_0_0_6"/>
<dbReference type="Proteomes" id="UP000008322">
    <property type="component" value="Chromosome"/>
</dbReference>
<dbReference type="GO" id="GO:0005886">
    <property type="term" value="C:plasma membrane"/>
    <property type="evidence" value="ECO:0007669"/>
    <property type="project" value="UniProtKB-SubCell"/>
</dbReference>
<dbReference type="GO" id="GO:0022857">
    <property type="term" value="F:transmembrane transporter activity"/>
    <property type="evidence" value="ECO:0007669"/>
    <property type="project" value="InterPro"/>
</dbReference>
<dbReference type="FunFam" id="1.20.1250.20:FF:000032">
    <property type="entry name" value="Protein TsgA"/>
    <property type="match status" value="1"/>
</dbReference>
<dbReference type="FunFam" id="1.20.1250.20:FF:000052">
    <property type="entry name" value="Protein TsgA"/>
    <property type="match status" value="1"/>
</dbReference>
<dbReference type="Gene3D" id="1.20.1250.20">
    <property type="entry name" value="MFS general substrate transporter like domains"/>
    <property type="match status" value="2"/>
</dbReference>
<dbReference type="HAMAP" id="MF_01044">
    <property type="entry name" value="MFS_TsgA"/>
    <property type="match status" value="1"/>
</dbReference>
<dbReference type="InterPro" id="IPR011701">
    <property type="entry name" value="MFS"/>
</dbReference>
<dbReference type="InterPro" id="IPR020846">
    <property type="entry name" value="MFS_dom"/>
</dbReference>
<dbReference type="InterPro" id="IPR036259">
    <property type="entry name" value="MFS_trans_sf"/>
</dbReference>
<dbReference type="InterPro" id="IPR023528">
    <property type="entry name" value="MFS_TsgA"/>
</dbReference>
<dbReference type="InterPro" id="IPR050375">
    <property type="entry name" value="MFS_TsgA-like"/>
</dbReference>
<dbReference type="NCBIfam" id="NF002982">
    <property type="entry name" value="PRK03699.1"/>
    <property type="match status" value="1"/>
</dbReference>
<dbReference type="PANTHER" id="PTHR43702">
    <property type="entry name" value="L-FUCOSE-PROTON SYMPORTER"/>
    <property type="match status" value="1"/>
</dbReference>
<dbReference type="PANTHER" id="PTHR43702:SF3">
    <property type="entry name" value="PROTEIN TSGA"/>
    <property type="match status" value="1"/>
</dbReference>
<dbReference type="Pfam" id="PF07690">
    <property type="entry name" value="MFS_1"/>
    <property type="match status" value="1"/>
</dbReference>
<dbReference type="SUPFAM" id="SSF103473">
    <property type="entry name" value="MFS general substrate transporter"/>
    <property type="match status" value="1"/>
</dbReference>
<dbReference type="PROSITE" id="PS50850">
    <property type="entry name" value="MFS"/>
    <property type="match status" value="1"/>
</dbReference>
<organism>
    <name type="scientific">Salmonella dublin (strain CT_02021853)</name>
    <dbReference type="NCBI Taxonomy" id="439851"/>
    <lineage>
        <taxon>Bacteria</taxon>
        <taxon>Pseudomonadati</taxon>
        <taxon>Pseudomonadota</taxon>
        <taxon>Gammaproteobacteria</taxon>
        <taxon>Enterobacterales</taxon>
        <taxon>Enterobacteriaceae</taxon>
        <taxon>Salmonella</taxon>
    </lineage>
</organism>
<keyword id="KW-0997">Cell inner membrane</keyword>
<keyword id="KW-1003">Cell membrane</keyword>
<keyword id="KW-0472">Membrane</keyword>
<keyword id="KW-0812">Transmembrane</keyword>
<keyword id="KW-1133">Transmembrane helix</keyword>
<comment type="subcellular location">
    <subcellularLocation>
        <location evidence="1">Cell inner membrane</location>
        <topology evidence="1">Multi-pass membrane protein</topology>
    </subcellularLocation>
</comment>
<comment type="similarity">
    <text evidence="1">Belongs to the major facilitator superfamily. TsgA family.</text>
</comment>
<evidence type="ECO:0000255" key="1">
    <source>
        <dbReference type="HAMAP-Rule" id="MF_01044"/>
    </source>
</evidence>
<feature type="chain" id="PRO_1000136146" description="Protein TsgA">
    <location>
        <begin position="1"/>
        <end position="393"/>
    </location>
</feature>
<feature type="transmembrane region" description="Helical" evidence="1">
    <location>
        <begin position="11"/>
        <end position="31"/>
    </location>
</feature>
<feature type="transmembrane region" description="Helical" evidence="1">
    <location>
        <begin position="51"/>
        <end position="71"/>
    </location>
</feature>
<feature type="transmembrane region" description="Helical" evidence="1">
    <location>
        <begin position="78"/>
        <end position="98"/>
    </location>
</feature>
<feature type="transmembrane region" description="Helical" evidence="1">
    <location>
        <begin position="101"/>
        <end position="121"/>
    </location>
</feature>
<feature type="transmembrane region" description="Helical" evidence="1">
    <location>
        <begin position="134"/>
        <end position="154"/>
    </location>
</feature>
<feature type="transmembrane region" description="Helical" evidence="1">
    <location>
        <begin position="162"/>
        <end position="182"/>
    </location>
</feature>
<feature type="transmembrane region" description="Helical" evidence="1">
    <location>
        <begin position="206"/>
        <end position="226"/>
    </location>
</feature>
<feature type="transmembrane region" description="Helical" evidence="1">
    <location>
        <begin position="245"/>
        <end position="265"/>
    </location>
</feature>
<feature type="transmembrane region" description="Helical" evidence="1">
    <location>
        <begin position="273"/>
        <end position="293"/>
    </location>
</feature>
<feature type="transmembrane region" description="Helical" evidence="1">
    <location>
        <begin position="298"/>
        <end position="318"/>
    </location>
</feature>
<feature type="transmembrane region" description="Helical" evidence="1">
    <location>
        <begin position="332"/>
        <end position="352"/>
    </location>
</feature>
<feature type="transmembrane region" description="Helical" evidence="1">
    <location>
        <begin position="361"/>
        <end position="381"/>
    </location>
</feature>
<gene>
    <name evidence="1" type="primary">tsgA</name>
    <name type="ordered locus">SeD_A3841</name>
</gene>
<name>TSGA_SALDC</name>
<proteinExistence type="inferred from homology"/>
<accession>B5FJP6</accession>
<sequence>MTNSNRIKLTWISFLSYALTGALVIVTGMVMGNIADYFHLPVSSMSNTFTFLNAGILISIFLNAWLMEIVPLKTQLRFGFILMVLAVAGLMFSHSLALFSAAMFVLGLVSGITMSIGTFLITQLYEGRQRGSRLLFTDSFFSMAGMIFPMVAAFLLARSIEWYWVYACIGLVYLAIFILTFGCEFPALGKHAQHSQAPVAKEKWGIGVLFLAVAALCYILGQLGFISWVPEYAKGLGMSLNDAGALVSDFWMSYMFGMWAFSFILRFFDLQRILTVLAGMAAVLMYLFITGTQAHMPWFILTLGFFSSAIYTSIITLGSQQTKVASPKLVNFILTCGTIGTMLTFVVTGPIVAHSGPQAALLTANGLYAVVFVMCFALGFVSRHRQHSAPATH</sequence>